<sequence>PTITNDGVSIAKEIELEDPYEKIGAELVKEVAKKTDDVAGDGTTTATVLAQALVKEGLRNVAAGANPLGLKRGIEKAVEKVTETLLKSAKEVETKEQIAATAAISAGDQSIGDLIAEAMDKVGNEGVITVEESNTFGLQLELTEGMRFDKG</sequence>
<name>CH60_MYCMR</name>
<proteinExistence type="inferred from homology"/>
<keyword id="KW-0067">ATP-binding</keyword>
<keyword id="KW-0143">Chaperone</keyword>
<keyword id="KW-0963">Cytoplasm</keyword>
<keyword id="KW-0413">Isomerase</keyword>
<keyword id="KW-0547">Nucleotide-binding</keyword>
<keyword id="KW-0346">Stress response</keyword>
<gene>
    <name evidence="1" type="primary">groEL</name>
    <name evidence="1" type="synonym">groL</name>
    <name type="synonym">mopA</name>
</gene>
<accession>Q50220</accession>
<accession>Q50213</accession>
<accession>Q53489</accession>
<organism>
    <name type="scientific">Mycobacterium marinum</name>
    <dbReference type="NCBI Taxonomy" id="1781"/>
    <lineage>
        <taxon>Bacteria</taxon>
        <taxon>Bacillati</taxon>
        <taxon>Actinomycetota</taxon>
        <taxon>Actinomycetes</taxon>
        <taxon>Mycobacteriales</taxon>
        <taxon>Mycobacteriaceae</taxon>
        <taxon>Mycobacterium</taxon>
        <taxon>Mycobacterium ulcerans group</taxon>
    </lineage>
</organism>
<comment type="function">
    <text evidence="1">Together with its co-chaperonin GroES, plays an essential role in assisting protein folding. The GroEL-GroES system forms a nano-cage that allows encapsulation of the non-native substrate proteins and provides a physical environment optimized to promote and accelerate protein folding.</text>
</comment>
<comment type="catalytic activity">
    <reaction evidence="1">
        <text>ATP + H2O + a folded polypeptide = ADP + phosphate + an unfolded polypeptide.</text>
        <dbReference type="EC" id="5.6.1.7"/>
    </reaction>
</comment>
<comment type="subunit">
    <text evidence="1">Forms a cylinder of 14 subunits composed of two heptameric rings stacked back-to-back. Interacts with the co-chaperonin GroES.</text>
</comment>
<comment type="subcellular location">
    <subcellularLocation>
        <location evidence="1">Cytoplasm</location>
    </subcellularLocation>
</comment>
<comment type="similarity">
    <text evidence="1 2">Belongs to the chaperonin (HSP60) family.</text>
</comment>
<protein>
    <recommendedName>
        <fullName evidence="1">Chaperonin GroEL</fullName>
        <ecNumber evidence="1">5.6.1.7</ecNumber>
    </recommendedName>
    <alternativeName>
        <fullName evidence="1">60 kDa chaperonin</fullName>
    </alternativeName>
    <alternativeName>
        <fullName>65 kDa heat shock protein</fullName>
    </alternativeName>
    <alternativeName>
        <fullName evidence="1">Chaperonin-60</fullName>
        <shortName evidence="1">Cpn60</shortName>
    </alternativeName>
</protein>
<reference key="1">
    <citation type="submission" date="1996-05" db="EMBL/GenBank/DDBJ databases">
        <authorList>
            <person name="Ros C."/>
            <person name="Belak K."/>
        </authorList>
    </citation>
    <scope>NUCLEOTIDE SEQUENCE [GENOMIC DNA]</scope>
    <source>
        <strain>ATCC 11565 / XVI</strain>
    </source>
</reference>
<reference key="2">
    <citation type="journal article" date="1995" name="Arch. Pathol. Lab. Med.">
        <title>Rapid Mycobacterium species assignment and unambiguous identification of mutations associated with antimicrobial resistance in Mycobacterium tuberculosis by automated DNA sequencing.</title>
        <authorList>
            <person name="Kapur V."/>
            <person name="Li L.L."/>
            <person name="Hamrick M.R."/>
            <person name="Plikaytis B.B."/>
            <person name="Shinnick T.M."/>
            <person name="Telenti A."/>
            <person name="Jacobs W.R. Jr."/>
            <person name="Banerjee A."/>
            <person name="Cole S."/>
            <person name="Yuen K.Y."/>
            <person name="Clarridge J.E."/>
            <person name="Kreiswirth B.N."/>
            <person name="Musser J.M."/>
        </authorList>
    </citation>
    <scope>NUCLEOTIDE SEQUENCE [GENOMIC DNA] OF 19-138</scope>
    <source>
        <strain>561</strain>
    </source>
</reference>
<reference key="3">
    <citation type="journal article" date="1995" name="Rinsho Byori">
        <title>Detection and identification of mycobacteria by PCR-RFLP method.</title>
        <authorList>
            <person name="Hidaka E."/>
            <person name="Ueno I."/>
            <person name="Kawakami Y."/>
            <person name="Furuwatari C."/>
            <person name="Furihata K."/>
            <person name="Katsuyama T."/>
        </authorList>
    </citation>
    <scope>NUCLEOTIDE SEQUENCE [GENOMIC DNA] OF 20-133</scope>
</reference>
<feature type="chain" id="PRO_0000063439" description="Chaperonin GroEL">
    <location>
        <begin position="1" status="less than"/>
        <end position="151" status="greater than"/>
    </location>
</feature>
<feature type="binding site" evidence="1">
    <location>
        <begin position="41"/>
        <end position="45"/>
    </location>
    <ligand>
        <name>ATP</name>
        <dbReference type="ChEBI" id="CHEBI:30616"/>
    </ligand>
</feature>
<feature type="sequence conflict" description="In Ref. 3; AAP31975." evidence="2" ref="3">
    <original>K</original>
    <variation>N</variation>
    <location>
        <position position="22"/>
    </location>
</feature>
<feature type="sequence conflict" description="In Ref. 3; AAP31975." evidence="2" ref="3">
    <original>A</original>
    <variation>S</variation>
    <location>
        <position position="32"/>
    </location>
</feature>
<feature type="non-terminal residue">
    <location>
        <position position="1"/>
    </location>
</feature>
<feature type="non-terminal residue">
    <location>
        <position position="151"/>
    </location>
</feature>
<evidence type="ECO:0000255" key="1">
    <source>
        <dbReference type="HAMAP-Rule" id="MF_00600"/>
    </source>
</evidence>
<evidence type="ECO:0000305" key="2"/>
<dbReference type="EC" id="5.6.1.7" evidence="1"/>
<dbReference type="EMBL" id="U55831">
    <property type="protein sequence ID" value="AAC44457.1"/>
    <property type="molecule type" value="Genomic_DNA"/>
</dbReference>
<dbReference type="EMBL" id="U17949">
    <property type="protein sequence ID" value="AAB39068.1"/>
    <property type="molecule type" value="Genomic_DNA"/>
</dbReference>
<dbReference type="EMBL" id="S76637">
    <property type="protein sequence ID" value="AAP31975.1"/>
    <property type="molecule type" value="Genomic_DNA"/>
</dbReference>
<dbReference type="SMR" id="Q50220"/>
<dbReference type="GO" id="GO:0005737">
    <property type="term" value="C:cytoplasm"/>
    <property type="evidence" value="ECO:0007669"/>
    <property type="project" value="UniProtKB-SubCell"/>
</dbReference>
<dbReference type="GO" id="GO:0005524">
    <property type="term" value="F:ATP binding"/>
    <property type="evidence" value="ECO:0007669"/>
    <property type="project" value="UniProtKB-KW"/>
</dbReference>
<dbReference type="GO" id="GO:0140662">
    <property type="term" value="F:ATP-dependent protein folding chaperone"/>
    <property type="evidence" value="ECO:0007669"/>
    <property type="project" value="InterPro"/>
</dbReference>
<dbReference type="GO" id="GO:0016853">
    <property type="term" value="F:isomerase activity"/>
    <property type="evidence" value="ECO:0007669"/>
    <property type="project" value="UniProtKB-KW"/>
</dbReference>
<dbReference type="GO" id="GO:0042026">
    <property type="term" value="P:protein refolding"/>
    <property type="evidence" value="ECO:0007669"/>
    <property type="project" value="InterPro"/>
</dbReference>
<dbReference type="Gene3D" id="1.10.560.10">
    <property type="entry name" value="GroEL-like equatorial domain"/>
    <property type="match status" value="1"/>
</dbReference>
<dbReference type="Gene3D" id="3.30.260.10">
    <property type="entry name" value="TCP-1-like chaperonin intermediate domain"/>
    <property type="match status" value="1"/>
</dbReference>
<dbReference type="InterPro" id="IPR017998">
    <property type="entry name" value="Chaperone_TCP-1"/>
</dbReference>
<dbReference type="InterPro" id="IPR001844">
    <property type="entry name" value="Cpn60/GroEL"/>
</dbReference>
<dbReference type="InterPro" id="IPR002423">
    <property type="entry name" value="Cpn60/GroEL/TCP-1"/>
</dbReference>
<dbReference type="InterPro" id="IPR027413">
    <property type="entry name" value="GROEL-like_equatorial_sf"/>
</dbReference>
<dbReference type="InterPro" id="IPR027410">
    <property type="entry name" value="TCP-1-like_intermed_sf"/>
</dbReference>
<dbReference type="PANTHER" id="PTHR45633">
    <property type="entry name" value="60 KDA HEAT SHOCK PROTEIN, MITOCHONDRIAL"/>
    <property type="match status" value="1"/>
</dbReference>
<dbReference type="Pfam" id="PF00118">
    <property type="entry name" value="Cpn60_TCP1"/>
    <property type="match status" value="1"/>
</dbReference>
<dbReference type="PRINTS" id="PR00304">
    <property type="entry name" value="TCOMPLEXTCP1"/>
</dbReference>
<dbReference type="SUPFAM" id="SSF48592">
    <property type="entry name" value="GroEL equatorial domain-like"/>
    <property type="match status" value="1"/>
</dbReference>